<proteinExistence type="inferred from homology"/>
<evidence type="ECO:0000255" key="1">
    <source>
        <dbReference type="HAMAP-Rule" id="MF_01383"/>
    </source>
</evidence>
<name>PSBD_NOSS1</name>
<sequence>MTIAVGRAPSRGWFDVLDDWLKRDRFVFVGWSGILLFPCAFLALGGWLTGTTFVTSWYTHGLASSYLEGANFLTVAVSSPADSMGHSLLLLWGPEAQGDLTRWFQLGGLWPFVALHGAFGLIGFMLRQFEIARLVGIRPYNALAFSAPIAVFVSVFLMYPLGQSSWFFAPSFGVAAIFRFLLFLQGFHNWTLNPFHMMGVAGVLGGALLCAIHGATVENTLFEDGEGANTFRAFNPTQSEETYSMVTANRFWSQIFGIAFSNKRWLHFFMLFVPVTGLWMSAVGIVGLALNLRAYDFVSQELRAAEDPEFETFYTKNILLNEGIRAWMAPQDQPHEKFVFPEEVLPRGNAL</sequence>
<protein>
    <recommendedName>
        <fullName evidence="1">Photosystem II D2 protein</fullName>
        <shortName evidence="1">PSII D2 protein</shortName>
        <ecNumber evidence="1">1.10.3.9</ecNumber>
    </recommendedName>
    <alternativeName>
        <fullName evidence="1">Photosystem Q(A) protein</fullName>
    </alternativeName>
</protein>
<organism>
    <name type="scientific">Nostoc sp. (strain PCC 7120 / SAG 25.82 / UTEX 2576)</name>
    <dbReference type="NCBI Taxonomy" id="103690"/>
    <lineage>
        <taxon>Bacteria</taxon>
        <taxon>Bacillati</taxon>
        <taxon>Cyanobacteriota</taxon>
        <taxon>Cyanophyceae</taxon>
        <taxon>Nostocales</taxon>
        <taxon>Nostocaceae</taxon>
        <taxon>Nostoc</taxon>
    </lineage>
</organism>
<keyword id="KW-0148">Chlorophyll</keyword>
<keyword id="KW-0157">Chromophore</keyword>
<keyword id="KW-0249">Electron transport</keyword>
<keyword id="KW-0408">Iron</keyword>
<keyword id="KW-0460">Magnesium</keyword>
<keyword id="KW-0472">Membrane</keyword>
<keyword id="KW-0479">Metal-binding</keyword>
<keyword id="KW-0560">Oxidoreductase</keyword>
<keyword id="KW-0602">Photosynthesis</keyword>
<keyword id="KW-0604">Photosystem II</keyword>
<keyword id="KW-1185">Reference proteome</keyword>
<keyword id="KW-0793">Thylakoid</keyword>
<keyword id="KW-0812">Transmembrane</keyword>
<keyword id="KW-1133">Transmembrane helix</keyword>
<keyword id="KW-0813">Transport</keyword>
<accession>Q8XFA5</accession>
<feature type="chain" id="PRO_0000359599" description="Photosystem II D2 protein">
    <location>
        <begin position="1"/>
        <end position="351"/>
    </location>
</feature>
<feature type="transmembrane region" description="Helical" evidence="1">
    <location>
        <begin position="39"/>
        <end position="59"/>
    </location>
</feature>
<feature type="transmembrane region" description="Helical" evidence="1">
    <location>
        <begin position="123"/>
        <end position="139"/>
    </location>
</feature>
<feature type="transmembrane region" description="Helical" evidence="1">
    <location>
        <begin position="151"/>
        <end position="164"/>
    </location>
</feature>
<feature type="transmembrane region" description="Helical" evidence="1">
    <location>
        <begin position="206"/>
        <end position="226"/>
    </location>
</feature>
<feature type="transmembrane region" description="Helical" evidence="1">
    <location>
        <begin position="277"/>
        <end position="293"/>
    </location>
</feature>
<feature type="binding site" description="axial binding residue" evidence="1">
    <location>
        <position position="116"/>
    </location>
    <ligand>
        <name>chlorophyll a</name>
        <dbReference type="ChEBI" id="CHEBI:58416"/>
        <label>ChlzD2</label>
    </ligand>
    <ligandPart>
        <name>Mg</name>
        <dbReference type="ChEBI" id="CHEBI:25107"/>
    </ligandPart>
</feature>
<feature type="binding site" evidence="1">
    <location>
        <position position="128"/>
    </location>
    <ligand>
        <name>pheophytin a</name>
        <dbReference type="ChEBI" id="CHEBI:136840"/>
        <label>D2</label>
    </ligand>
</feature>
<feature type="binding site" evidence="1">
    <location>
        <position position="141"/>
    </location>
    <ligand>
        <name>pheophytin a</name>
        <dbReference type="ChEBI" id="CHEBI:136840"/>
        <label>D2</label>
    </ligand>
</feature>
<feature type="binding site" description="axial binding residue" evidence="1">
    <location>
        <position position="196"/>
    </location>
    <ligand>
        <name>chlorophyll a</name>
        <dbReference type="ChEBI" id="CHEBI:58416"/>
        <label>PD2</label>
    </ligand>
    <ligandPart>
        <name>Mg</name>
        <dbReference type="ChEBI" id="CHEBI:25107"/>
    </ligandPart>
</feature>
<feature type="binding site" evidence="1">
    <location>
        <position position="213"/>
    </location>
    <ligand>
        <name>a plastoquinone</name>
        <dbReference type="ChEBI" id="CHEBI:17757"/>
        <label>Q(A)</label>
    </ligand>
</feature>
<feature type="binding site" evidence="1">
    <location>
        <position position="213"/>
    </location>
    <ligand>
        <name>Fe cation</name>
        <dbReference type="ChEBI" id="CHEBI:24875"/>
        <note>ligand shared with heterodimeric partner</note>
    </ligand>
</feature>
<feature type="binding site" evidence="1">
    <location>
        <position position="260"/>
    </location>
    <ligand>
        <name>a plastoquinone</name>
        <dbReference type="ChEBI" id="CHEBI:17757"/>
        <label>Q(A)</label>
    </ligand>
</feature>
<feature type="binding site" evidence="1">
    <location>
        <position position="267"/>
    </location>
    <ligand>
        <name>Fe cation</name>
        <dbReference type="ChEBI" id="CHEBI:24875"/>
        <note>ligand shared with heterodimeric partner</note>
    </ligand>
</feature>
<comment type="function">
    <text evidence="1">Photosystem II (PSII) is a light-driven water:plastoquinone oxidoreductase that uses light energy to abstract electrons from H(2)O, generating O(2) and a proton gradient subsequently used for ATP formation. It consists of a core antenna complex that captures photons, and an electron transfer chain that converts photonic excitation into a charge separation. The D1/D2 (PsbA/PsbD) reaction center heterodimer binds P680, the primary electron donor of PSII as well as several subsequent electron acceptors. D2 is needed for assembly of a stable PSII complex.</text>
</comment>
<comment type="catalytic activity">
    <reaction evidence="1">
        <text>2 a plastoquinone + 4 hnu + 2 H2O = 2 a plastoquinol + O2</text>
        <dbReference type="Rhea" id="RHEA:36359"/>
        <dbReference type="Rhea" id="RHEA-COMP:9561"/>
        <dbReference type="Rhea" id="RHEA-COMP:9562"/>
        <dbReference type="ChEBI" id="CHEBI:15377"/>
        <dbReference type="ChEBI" id="CHEBI:15379"/>
        <dbReference type="ChEBI" id="CHEBI:17757"/>
        <dbReference type="ChEBI" id="CHEBI:30212"/>
        <dbReference type="ChEBI" id="CHEBI:62192"/>
        <dbReference type="EC" id="1.10.3.9"/>
    </reaction>
</comment>
<comment type="cofactor">
    <text evidence="1">The D1/D2 heterodimer binds P680, chlorophylls that are the primary electron donor of PSII, and subsequent electron acceptors. It shares a non-heme iron and each subunit binds pheophytin, quinone, additional chlorophylls, carotenoids and lipids. There is also a Cl(-1) ion associated with D1 and D2, which is required for oxygen evolution. The PSII complex binds additional chlorophylls, carotenoids and specific lipids.</text>
</comment>
<comment type="subunit">
    <text evidence="1">PSII is composed of 1 copy each of membrane proteins PsbA, PsbB, PsbC, PsbD, PsbE, PsbF, PsbH, PsbI, PsbJ, PsbK, PsbL, PsbM, PsbT, PsbX, PsbY, PsbZ, Psb30/Ycf12, peripheral proteins PsbO, CyanoQ (PsbQ), PsbU, PsbV and a large number of cofactors. It forms dimeric complexes.</text>
</comment>
<comment type="subcellular location">
    <subcellularLocation>
        <location evidence="1">Cellular thylakoid membrane</location>
        <topology evidence="1">Multi-pass membrane protein</topology>
    </subcellularLocation>
</comment>
<comment type="miscellaneous">
    <text evidence="1">2 of the reaction center chlorophylls (ChlD1 and ChlD2) are entirely coordinated by water.</text>
</comment>
<comment type="similarity">
    <text evidence="1">Belongs to the reaction center PufL/M/PsbA/D family.</text>
</comment>
<gene>
    <name evidence="1" type="primary">psbD1</name>
    <name type="ordered locus">alr4290</name>
</gene>
<gene>
    <name evidence="1" type="primary">psbD2</name>
    <name type="ordered locus">alr4548</name>
</gene>
<reference key="1">
    <citation type="journal article" date="2001" name="DNA Res.">
        <title>Complete genomic sequence of the filamentous nitrogen-fixing cyanobacterium Anabaena sp. strain PCC 7120.</title>
        <authorList>
            <person name="Kaneko T."/>
            <person name="Nakamura Y."/>
            <person name="Wolk C.P."/>
            <person name="Kuritz T."/>
            <person name="Sasamoto S."/>
            <person name="Watanabe A."/>
            <person name="Iriguchi M."/>
            <person name="Ishikawa A."/>
            <person name="Kawashima K."/>
            <person name="Kimura T."/>
            <person name="Kishida Y."/>
            <person name="Kohara M."/>
            <person name="Matsumoto M."/>
            <person name="Matsuno A."/>
            <person name="Muraki A."/>
            <person name="Nakazaki N."/>
            <person name="Shimpo S."/>
            <person name="Sugimoto M."/>
            <person name="Takazawa M."/>
            <person name="Yamada M."/>
            <person name="Yasuda M."/>
            <person name="Tabata S."/>
        </authorList>
    </citation>
    <scope>NUCLEOTIDE SEQUENCE [LARGE SCALE GENOMIC DNA]</scope>
    <source>
        <strain>PCC 7120 / SAG 25.82 / UTEX 2576</strain>
    </source>
</reference>
<dbReference type="EC" id="1.10.3.9" evidence="1"/>
<dbReference type="EMBL" id="BA000019">
    <property type="protein sequence ID" value="BAB75989.1"/>
    <property type="molecule type" value="Genomic_DNA"/>
</dbReference>
<dbReference type="EMBL" id="BA000019">
    <property type="protein sequence ID" value="BAB76247.1"/>
    <property type="molecule type" value="Genomic_DNA"/>
</dbReference>
<dbReference type="PIR" id="AC2342">
    <property type="entry name" value="AC2342"/>
</dbReference>
<dbReference type="PIR" id="AD2374">
    <property type="entry name" value="AD2374"/>
</dbReference>
<dbReference type="PIR" id="S42646">
    <property type="entry name" value="S42646"/>
</dbReference>
<dbReference type="RefSeq" id="WP_010998428.1">
    <property type="nucleotide sequence ID" value="NC_003272.1"/>
</dbReference>
<dbReference type="SMR" id="Q8XFA5"/>
<dbReference type="STRING" id="103690.gene:10496339"/>
<dbReference type="KEGG" id="ana:alr4290"/>
<dbReference type="KEGG" id="ana:alr4548"/>
<dbReference type="eggNOG" id="ENOG502Z8JK">
    <property type="taxonomic scope" value="Bacteria"/>
</dbReference>
<dbReference type="OrthoDB" id="505356at2"/>
<dbReference type="Proteomes" id="UP000002483">
    <property type="component" value="Chromosome"/>
</dbReference>
<dbReference type="GO" id="GO:0009523">
    <property type="term" value="C:photosystem II"/>
    <property type="evidence" value="ECO:0007669"/>
    <property type="project" value="UniProtKB-KW"/>
</dbReference>
<dbReference type="GO" id="GO:0031676">
    <property type="term" value="C:plasma membrane-derived thylakoid membrane"/>
    <property type="evidence" value="ECO:0007669"/>
    <property type="project" value="UniProtKB-SubCell"/>
</dbReference>
<dbReference type="GO" id="GO:0016168">
    <property type="term" value="F:chlorophyll binding"/>
    <property type="evidence" value="ECO:0007669"/>
    <property type="project" value="UniProtKB-UniRule"/>
</dbReference>
<dbReference type="GO" id="GO:0045156">
    <property type="term" value="F:electron transporter, transferring electrons within the cyclic electron transport pathway of photosynthesis activity"/>
    <property type="evidence" value="ECO:0007669"/>
    <property type="project" value="InterPro"/>
</dbReference>
<dbReference type="GO" id="GO:0005506">
    <property type="term" value="F:iron ion binding"/>
    <property type="evidence" value="ECO:0007669"/>
    <property type="project" value="UniProtKB-UniRule"/>
</dbReference>
<dbReference type="GO" id="GO:0010242">
    <property type="term" value="F:oxygen evolving activity"/>
    <property type="evidence" value="ECO:0007669"/>
    <property type="project" value="UniProtKB-EC"/>
</dbReference>
<dbReference type="GO" id="GO:0009772">
    <property type="term" value="P:photosynthetic electron transport in photosystem II"/>
    <property type="evidence" value="ECO:0007669"/>
    <property type="project" value="InterPro"/>
</dbReference>
<dbReference type="CDD" id="cd09288">
    <property type="entry name" value="Photosystem-II_D2"/>
    <property type="match status" value="1"/>
</dbReference>
<dbReference type="FunFam" id="1.20.85.10:FF:000001">
    <property type="entry name" value="photosystem II D2 protein-like"/>
    <property type="match status" value="1"/>
</dbReference>
<dbReference type="Gene3D" id="1.20.85.10">
    <property type="entry name" value="Photosystem II protein D1-like"/>
    <property type="match status" value="1"/>
</dbReference>
<dbReference type="HAMAP" id="MF_01383">
    <property type="entry name" value="PSII_PsbD_D2"/>
    <property type="match status" value="1"/>
</dbReference>
<dbReference type="InterPro" id="IPR055266">
    <property type="entry name" value="D1/D2"/>
</dbReference>
<dbReference type="InterPro" id="IPR036854">
    <property type="entry name" value="Photo_II_D1/D2_sf"/>
</dbReference>
<dbReference type="InterPro" id="IPR000484">
    <property type="entry name" value="Photo_RC_L/M"/>
</dbReference>
<dbReference type="InterPro" id="IPR055265">
    <property type="entry name" value="Photo_RC_L/M_CS"/>
</dbReference>
<dbReference type="InterPro" id="IPR005868">
    <property type="entry name" value="PSII_PsbD/D2"/>
</dbReference>
<dbReference type="NCBIfam" id="TIGR01152">
    <property type="entry name" value="psbD"/>
    <property type="match status" value="1"/>
</dbReference>
<dbReference type="PANTHER" id="PTHR33149:SF12">
    <property type="entry name" value="PHOTOSYSTEM II D2 PROTEIN"/>
    <property type="match status" value="1"/>
</dbReference>
<dbReference type="PANTHER" id="PTHR33149">
    <property type="entry name" value="PHOTOSYSTEM II PROTEIN D1"/>
    <property type="match status" value="1"/>
</dbReference>
<dbReference type="Pfam" id="PF00124">
    <property type="entry name" value="Photo_RC"/>
    <property type="match status" value="1"/>
</dbReference>
<dbReference type="PRINTS" id="PR00256">
    <property type="entry name" value="REACTNCENTRE"/>
</dbReference>
<dbReference type="SUPFAM" id="SSF81483">
    <property type="entry name" value="Bacterial photosystem II reaction centre, L and M subunits"/>
    <property type="match status" value="1"/>
</dbReference>
<dbReference type="PROSITE" id="PS00244">
    <property type="entry name" value="REACTION_CENTER"/>
    <property type="match status" value="1"/>
</dbReference>